<gene>
    <name evidence="1" type="primary">prfC</name>
    <name type="ordered locus">spr0396</name>
</gene>
<comment type="function">
    <text evidence="1">Increases the formation of ribosomal termination complexes and stimulates activities of RF-1 and RF-2. It binds guanine nucleotides and has strong preference for UGA stop codons. It may interact directly with the ribosome. The stimulation of RF-1 and RF-2 is significantly reduced by GTP and GDP, but not by GMP.</text>
</comment>
<comment type="subcellular location">
    <subcellularLocation>
        <location evidence="1">Cytoplasm</location>
    </subcellularLocation>
</comment>
<comment type="similarity">
    <text evidence="1">Belongs to the TRAFAC class translation factor GTPase superfamily. Classic translation factor GTPase family. PrfC subfamily.</text>
</comment>
<evidence type="ECO:0000255" key="1">
    <source>
        <dbReference type="HAMAP-Rule" id="MF_00072"/>
    </source>
</evidence>
<protein>
    <recommendedName>
        <fullName evidence="1">Peptide chain release factor 3</fullName>
        <shortName evidence="1">RF-3</shortName>
    </recommendedName>
</protein>
<dbReference type="EMBL" id="AE007317">
    <property type="protein sequence ID" value="AAK99200.1"/>
    <property type="molecule type" value="Genomic_DNA"/>
</dbReference>
<dbReference type="PIR" id="D97921">
    <property type="entry name" value="D97921"/>
</dbReference>
<dbReference type="RefSeq" id="NP_357990.1">
    <property type="nucleotide sequence ID" value="NC_003098.1"/>
</dbReference>
<dbReference type="RefSeq" id="WP_001025419.1">
    <property type="nucleotide sequence ID" value="NC_003098.1"/>
</dbReference>
<dbReference type="SMR" id="Q8DR09"/>
<dbReference type="STRING" id="171101.spr0396"/>
<dbReference type="KEGG" id="spr:spr0396"/>
<dbReference type="PATRIC" id="fig|171101.6.peg.439"/>
<dbReference type="eggNOG" id="COG4108">
    <property type="taxonomic scope" value="Bacteria"/>
</dbReference>
<dbReference type="HOGENOM" id="CLU_002794_2_1_9"/>
<dbReference type="Proteomes" id="UP000000586">
    <property type="component" value="Chromosome"/>
</dbReference>
<dbReference type="GO" id="GO:0005829">
    <property type="term" value="C:cytosol"/>
    <property type="evidence" value="ECO:0000318"/>
    <property type="project" value="GO_Central"/>
</dbReference>
<dbReference type="GO" id="GO:0005525">
    <property type="term" value="F:GTP binding"/>
    <property type="evidence" value="ECO:0007669"/>
    <property type="project" value="UniProtKB-UniRule"/>
</dbReference>
<dbReference type="GO" id="GO:0003924">
    <property type="term" value="F:GTPase activity"/>
    <property type="evidence" value="ECO:0007669"/>
    <property type="project" value="InterPro"/>
</dbReference>
<dbReference type="GO" id="GO:0016150">
    <property type="term" value="F:translation release factor activity, codon nonspecific"/>
    <property type="evidence" value="ECO:0000318"/>
    <property type="project" value="GO_Central"/>
</dbReference>
<dbReference type="GO" id="GO:0016149">
    <property type="term" value="F:translation release factor activity, codon specific"/>
    <property type="evidence" value="ECO:0007669"/>
    <property type="project" value="UniProtKB-UniRule"/>
</dbReference>
<dbReference type="GO" id="GO:0006449">
    <property type="term" value="P:regulation of translational termination"/>
    <property type="evidence" value="ECO:0007669"/>
    <property type="project" value="UniProtKB-UniRule"/>
</dbReference>
<dbReference type="GO" id="GO:0006415">
    <property type="term" value="P:translational termination"/>
    <property type="evidence" value="ECO:0000318"/>
    <property type="project" value="GO_Central"/>
</dbReference>
<dbReference type="CDD" id="cd04169">
    <property type="entry name" value="RF3"/>
    <property type="match status" value="1"/>
</dbReference>
<dbReference type="CDD" id="cd16259">
    <property type="entry name" value="RF3_III"/>
    <property type="match status" value="1"/>
</dbReference>
<dbReference type="FunFam" id="2.40.30.10:FF:000040">
    <property type="entry name" value="Peptide chain release factor 3"/>
    <property type="match status" value="1"/>
</dbReference>
<dbReference type="FunFam" id="3.30.70.3280:FF:000001">
    <property type="entry name" value="Peptide chain release factor 3"/>
    <property type="match status" value="1"/>
</dbReference>
<dbReference type="FunFam" id="3.40.50.300:FF:000542">
    <property type="entry name" value="Peptide chain release factor 3"/>
    <property type="match status" value="1"/>
</dbReference>
<dbReference type="Gene3D" id="3.40.50.300">
    <property type="entry name" value="P-loop containing nucleotide triphosphate hydrolases"/>
    <property type="match status" value="1"/>
</dbReference>
<dbReference type="Gene3D" id="3.30.70.3280">
    <property type="entry name" value="Peptide chain release factor 3, domain III"/>
    <property type="match status" value="1"/>
</dbReference>
<dbReference type="Gene3D" id="2.40.30.10">
    <property type="entry name" value="Translation factors"/>
    <property type="match status" value="1"/>
</dbReference>
<dbReference type="HAMAP" id="MF_00072">
    <property type="entry name" value="Rel_fac_3"/>
    <property type="match status" value="1"/>
</dbReference>
<dbReference type="InterPro" id="IPR053905">
    <property type="entry name" value="EF-G-like_DII"/>
</dbReference>
<dbReference type="InterPro" id="IPR035647">
    <property type="entry name" value="EFG_III/V"/>
</dbReference>
<dbReference type="InterPro" id="IPR031157">
    <property type="entry name" value="G_TR_CS"/>
</dbReference>
<dbReference type="InterPro" id="IPR027417">
    <property type="entry name" value="P-loop_NTPase"/>
</dbReference>
<dbReference type="InterPro" id="IPR004548">
    <property type="entry name" value="PrfC"/>
</dbReference>
<dbReference type="InterPro" id="IPR032090">
    <property type="entry name" value="RF3_C"/>
</dbReference>
<dbReference type="InterPro" id="IPR038467">
    <property type="entry name" value="RF3_dom_3_sf"/>
</dbReference>
<dbReference type="InterPro" id="IPR041732">
    <property type="entry name" value="RF3_GTP-bd"/>
</dbReference>
<dbReference type="InterPro" id="IPR005225">
    <property type="entry name" value="Small_GTP-bd"/>
</dbReference>
<dbReference type="InterPro" id="IPR000795">
    <property type="entry name" value="T_Tr_GTP-bd_dom"/>
</dbReference>
<dbReference type="InterPro" id="IPR009000">
    <property type="entry name" value="Transl_B-barrel_sf"/>
</dbReference>
<dbReference type="NCBIfam" id="TIGR00503">
    <property type="entry name" value="prfC"/>
    <property type="match status" value="1"/>
</dbReference>
<dbReference type="NCBIfam" id="NF001964">
    <property type="entry name" value="PRK00741.1"/>
    <property type="match status" value="1"/>
</dbReference>
<dbReference type="NCBIfam" id="TIGR00231">
    <property type="entry name" value="small_GTP"/>
    <property type="match status" value="1"/>
</dbReference>
<dbReference type="PANTHER" id="PTHR43556">
    <property type="entry name" value="PEPTIDE CHAIN RELEASE FACTOR RF3"/>
    <property type="match status" value="1"/>
</dbReference>
<dbReference type="PANTHER" id="PTHR43556:SF2">
    <property type="entry name" value="PEPTIDE CHAIN RELEASE FACTOR RF3"/>
    <property type="match status" value="1"/>
</dbReference>
<dbReference type="Pfam" id="PF22042">
    <property type="entry name" value="EF-G_D2"/>
    <property type="match status" value="1"/>
</dbReference>
<dbReference type="Pfam" id="PF00009">
    <property type="entry name" value="GTP_EFTU"/>
    <property type="match status" value="1"/>
</dbReference>
<dbReference type="Pfam" id="PF16658">
    <property type="entry name" value="RF3_C"/>
    <property type="match status" value="1"/>
</dbReference>
<dbReference type="PRINTS" id="PR00315">
    <property type="entry name" value="ELONGATNFCT"/>
</dbReference>
<dbReference type="PRINTS" id="PR01037">
    <property type="entry name" value="TCRTETOQM"/>
</dbReference>
<dbReference type="SUPFAM" id="SSF54980">
    <property type="entry name" value="EF-G C-terminal domain-like"/>
    <property type="match status" value="1"/>
</dbReference>
<dbReference type="SUPFAM" id="SSF52540">
    <property type="entry name" value="P-loop containing nucleoside triphosphate hydrolases"/>
    <property type="match status" value="1"/>
</dbReference>
<dbReference type="SUPFAM" id="SSF50447">
    <property type="entry name" value="Translation proteins"/>
    <property type="match status" value="1"/>
</dbReference>
<dbReference type="PROSITE" id="PS00301">
    <property type="entry name" value="G_TR_1"/>
    <property type="match status" value="1"/>
</dbReference>
<dbReference type="PROSITE" id="PS51722">
    <property type="entry name" value="G_TR_2"/>
    <property type="match status" value="1"/>
</dbReference>
<feature type="chain" id="PRO_0000210973" description="Peptide chain release factor 3">
    <location>
        <begin position="1"/>
        <end position="514"/>
    </location>
</feature>
<feature type="domain" description="tr-type G">
    <location>
        <begin position="8"/>
        <end position="268"/>
    </location>
</feature>
<feature type="binding site" evidence="1">
    <location>
        <begin position="17"/>
        <end position="24"/>
    </location>
    <ligand>
        <name>GTP</name>
        <dbReference type="ChEBI" id="CHEBI:37565"/>
    </ligand>
</feature>
<feature type="binding site" evidence="1">
    <location>
        <begin position="85"/>
        <end position="89"/>
    </location>
    <ligand>
        <name>GTP</name>
        <dbReference type="ChEBI" id="CHEBI:37565"/>
    </ligand>
</feature>
<feature type="binding site" evidence="1">
    <location>
        <begin position="139"/>
        <end position="142"/>
    </location>
    <ligand>
        <name>GTP</name>
        <dbReference type="ChEBI" id="CHEBI:37565"/>
    </ligand>
</feature>
<proteinExistence type="inferred from homology"/>
<sequence>MNIQEEIKKRRTFAIISHPDAGKTTITEQLLYFGGEIREAGTVKGKKTGTFAKSDWMDIEKQRGISVTSSVMQFDYDGKRVNILDTPGHEDFSEDTYRTLMAVDAAVMVVDSAKGIEAQTKKLFEVVKHRGIPVFTFMNKLDRDGREPLDLLQELEEILGIASYPMNWPIGMGKAFEGLYDLYNQRLELYKGDERFASLEDGDKLFGSNPFYEQVKDDIELLNEAGNEFSEEAILAGELTPVFFGSALTNFGVQTFLEIFLKFAPEPHGHKKTDGEIVDPYDKDFSGFVFKIQANMDPRHRDRIAFVRIVSGEFERGMSVNLPRTGKGAKLSNVTQFMAESRENVINAVAGDIIGVYDTGTYQVGDTLTVGKNKFEFEPLPTFTPEIFMKVSAKNVMKQKSFHKGIEQLVQEGAVQLYKNYQTGEYMLGAVGQLQFEVFKHRMEGEYNAEVVMSPMGKKTVRWIKPEDLDERMSSSRNILAKDRFDQPVFLFENDFALRWFADKYPDVELEEKM</sequence>
<name>RF3_STRR6</name>
<organism>
    <name type="scientific">Streptococcus pneumoniae (strain ATCC BAA-255 / R6)</name>
    <dbReference type="NCBI Taxonomy" id="171101"/>
    <lineage>
        <taxon>Bacteria</taxon>
        <taxon>Bacillati</taxon>
        <taxon>Bacillota</taxon>
        <taxon>Bacilli</taxon>
        <taxon>Lactobacillales</taxon>
        <taxon>Streptococcaceae</taxon>
        <taxon>Streptococcus</taxon>
    </lineage>
</organism>
<keyword id="KW-0963">Cytoplasm</keyword>
<keyword id="KW-0342">GTP-binding</keyword>
<keyword id="KW-0547">Nucleotide-binding</keyword>
<keyword id="KW-0648">Protein biosynthesis</keyword>
<keyword id="KW-1185">Reference proteome</keyword>
<reference key="1">
    <citation type="journal article" date="2001" name="J. Bacteriol.">
        <title>Genome of the bacterium Streptococcus pneumoniae strain R6.</title>
        <authorList>
            <person name="Hoskins J."/>
            <person name="Alborn W.E. Jr."/>
            <person name="Arnold J."/>
            <person name="Blaszczak L.C."/>
            <person name="Burgett S."/>
            <person name="DeHoff B.S."/>
            <person name="Estrem S.T."/>
            <person name="Fritz L."/>
            <person name="Fu D.-J."/>
            <person name="Fuller W."/>
            <person name="Geringer C."/>
            <person name="Gilmour R."/>
            <person name="Glass J.S."/>
            <person name="Khoja H."/>
            <person name="Kraft A.R."/>
            <person name="Lagace R.E."/>
            <person name="LeBlanc D.J."/>
            <person name="Lee L.N."/>
            <person name="Lefkowitz E.J."/>
            <person name="Lu J."/>
            <person name="Matsushima P."/>
            <person name="McAhren S.M."/>
            <person name="McHenney M."/>
            <person name="McLeaster K."/>
            <person name="Mundy C.W."/>
            <person name="Nicas T.I."/>
            <person name="Norris F.H."/>
            <person name="O'Gara M."/>
            <person name="Peery R.B."/>
            <person name="Robertson G.T."/>
            <person name="Rockey P."/>
            <person name="Sun P.-M."/>
            <person name="Winkler M.E."/>
            <person name="Yang Y."/>
            <person name="Young-Bellido M."/>
            <person name="Zhao G."/>
            <person name="Zook C.A."/>
            <person name="Baltz R.H."/>
            <person name="Jaskunas S.R."/>
            <person name="Rosteck P.R. Jr."/>
            <person name="Skatrud P.L."/>
            <person name="Glass J.I."/>
        </authorList>
    </citation>
    <scope>NUCLEOTIDE SEQUENCE [LARGE SCALE GENOMIC DNA]</scope>
    <source>
        <strain>ATCC BAA-255 / R6</strain>
    </source>
</reference>
<accession>Q8DR09</accession>